<protein>
    <recommendedName>
        <fullName evidence="1">UDP-N-acetylglucosamine 1-carboxyvinyltransferase</fullName>
        <ecNumber evidence="1">2.5.1.7</ecNumber>
    </recommendedName>
    <alternativeName>
        <fullName evidence="1">Enoylpyruvate transferase</fullName>
    </alternativeName>
    <alternativeName>
        <fullName evidence="1">UDP-N-acetylglucosamine enolpyruvyl transferase</fullName>
        <shortName evidence="1">EPT</shortName>
    </alternativeName>
</protein>
<sequence length="430" mass="45642">MDRIRIVGGNALNGIIPISGAKNAALPLMIASLLTSDTLTLENVPHLADVELLLRILGNHGVDIAVNGRRERQSGSYSRTIHFTCRTIVDTNAPYELVSKMRASFWVIGPLLAREGKARVSLPGGCAIGTRPVDLFIDGLRALGATLEIDSGYIEATAPKGGLIGASYTFPKVSVGATHVMLMAASLARGTTVIHNAAREPEVVDLANCLNAMGAKITGQGTATITIEGVTSLSGARHRVLPDRIETGTYAMAVAMTGGDVTLEGTDITLLDTAVEALRRAGAEVSAIEDGIRVIGHGDAIRPVDIVTEPFPGFPTDLQAQFMGLMTRAQGVAHVTETIFENRFMHVQELARLGAKITLSGQTARIEGVQRLRGAPVMATDLRASVSLVIAGLAAEGETLVNRVYHLDRGFERLEEKLTRCGAIVERISD</sequence>
<name>MURA_ALLAM</name>
<comment type="function">
    <text evidence="1">Cell wall formation. Adds enolpyruvyl to UDP-N-acetylglucosamine.</text>
</comment>
<comment type="catalytic activity">
    <reaction evidence="1">
        <text>phosphoenolpyruvate + UDP-N-acetyl-alpha-D-glucosamine = UDP-N-acetyl-3-O-(1-carboxyvinyl)-alpha-D-glucosamine + phosphate</text>
        <dbReference type="Rhea" id="RHEA:18681"/>
        <dbReference type="ChEBI" id="CHEBI:43474"/>
        <dbReference type="ChEBI" id="CHEBI:57705"/>
        <dbReference type="ChEBI" id="CHEBI:58702"/>
        <dbReference type="ChEBI" id="CHEBI:68483"/>
        <dbReference type="EC" id="2.5.1.7"/>
    </reaction>
</comment>
<comment type="pathway">
    <text evidence="1">Cell wall biogenesis; peptidoglycan biosynthesis.</text>
</comment>
<comment type="subcellular location">
    <subcellularLocation>
        <location evidence="1">Cytoplasm</location>
    </subcellularLocation>
</comment>
<comment type="similarity">
    <text evidence="1">Belongs to the EPSP synthase family. MurA subfamily.</text>
</comment>
<dbReference type="EC" id="2.5.1.7" evidence="1"/>
<dbReference type="EMBL" id="CP000633">
    <property type="protein sequence ID" value="ACM35460.1"/>
    <property type="molecule type" value="Genomic_DNA"/>
</dbReference>
<dbReference type="RefSeq" id="WP_015914887.1">
    <property type="nucleotide sequence ID" value="NC_011989.1"/>
</dbReference>
<dbReference type="SMR" id="B9JR47"/>
<dbReference type="STRING" id="311402.Avi_0645"/>
<dbReference type="GeneID" id="60681573"/>
<dbReference type="KEGG" id="avi:Avi_0645"/>
<dbReference type="eggNOG" id="COG0766">
    <property type="taxonomic scope" value="Bacteria"/>
</dbReference>
<dbReference type="HOGENOM" id="CLU_027387_0_0_5"/>
<dbReference type="UniPathway" id="UPA00219"/>
<dbReference type="Proteomes" id="UP000001596">
    <property type="component" value="Chromosome 1"/>
</dbReference>
<dbReference type="GO" id="GO:0005737">
    <property type="term" value="C:cytoplasm"/>
    <property type="evidence" value="ECO:0007669"/>
    <property type="project" value="UniProtKB-SubCell"/>
</dbReference>
<dbReference type="GO" id="GO:0008760">
    <property type="term" value="F:UDP-N-acetylglucosamine 1-carboxyvinyltransferase activity"/>
    <property type="evidence" value="ECO:0007669"/>
    <property type="project" value="UniProtKB-UniRule"/>
</dbReference>
<dbReference type="GO" id="GO:0051301">
    <property type="term" value="P:cell division"/>
    <property type="evidence" value="ECO:0007669"/>
    <property type="project" value="UniProtKB-KW"/>
</dbReference>
<dbReference type="GO" id="GO:0071555">
    <property type="term" value="P:cell wall organization"/>
    <property type="evidence" value="ECO:0007669"/>
    <property type="project" value="UniProtKB-KW"/>
</dbReference>
<dbReference type="GO" id="GO:0009252">
    <property type="term" value="P:peptidoglycan biosynthetic process"/>
    <property type="evidence" value="ECO:0007669"/>
    <property type="project" value="UniProtKB-UniRule"/>
</dbReference>
<dbReference type="GO" id="GO:0008360">
    <property type="term" value="P:regulation of cell shape"/>
    <property type="evidence" value="ECO:0007669"/>
    <property type="project" value="UniProtKB-KW"/>
</dbReference>
<dbReference type="GO" id="GO:0019277">
    <property type="term" value="P:UDP-N-acetylgalactosamine biosynthetic process"/>
    <property type="evidence" value="ECO:0007669"/>
    <property type="project" value="InterPro"/>
</dbReference>
<dbReference type="CDD" id="cd01555">
    <property type="entry name" value="UdpNAET"/>
    <property type="match status" value="1"/>
</dbReference>
<dbReference type="FunFam" id="3.65.10.10:FF:000001">
    <property type="entry name" value="UDP-N-acetylglucosamine 1-carboxyvinyltransferase"/>
    <property type="match status" value="1"/>
</dbReference>
<dbReference type="Gene3D" id="3.65.10.10">
    <property type="entry name" value="Enolpyruvate transferase domain"/>
    <property type="match status" value="2"/>
</dbReference>
<dbReference type="HAMAP" id="MF_00111">
    <property type="entry name" value="MurA"/>
    <property type="match status" value="1"/>
</dbReference>
<dbReference type="InterPro" id="IPR001986">
    <property type="entry name" value="Enolpyruvate_Tfrase_dom"/>
</dbReference>
<dbReference type="InterPro" id="IPR036968">
    <property type="entry name" value="Enolpyruvate_Tfrase_sf"/>
</dbReference>
<dbReference type="InterPro" id="IPR050068">
    <property type="entry name" value="MurA_subfamily"/>
</dbReference>
<dbReference type="InterPro" id="IPR013792">
    <property type="entry name" value="RNA3'P_cycl/enolpyr_Trfase_a/b"/>
</dbReference>
<dbReference type="InterPro" id="IPR005750">
    <property type="entry name" value="UDP_GlcNAc_COvinyl_MurA"/>
</dbReference>
<dbReference type="NCBIfam" id="TIGR01072">
    <property type="entry name" value="murA"/>
    <property type="match status" value="1"/>
</dbReference>
<dbReference type="NCBIfam" id="NF006873">
    <property type="entry name" value="PRK09369.1"/>
    <property type="match status" value="1"/>
</dbReference>
<dbReference type="PANTHER" id="PTHR43783">
    <property type="entry name" value="UDP-N-ACETYLGLUCOSAMINE 1-CARBOXYVINYLTRANSFERASE"/>
    <property type="match status" value="1"/>
</dbReference>
<dbReference type="PANTHER" id="PTHR43783:SF1">
    <property type="entry name" value="UDP-N-ACETYLGLUCOSAMINE 1-CARBOXYVINYLTRANSFERASE"/>
    <property type="match status" value="1"/>
</dbReference>
<dbReference type="Pfam" id="PF00275">
    <property type="entry name" value="EPSP_synthase"/>
    <property type="match status" value="1"/>
</dbReference>
<dbReference type="SUPFAM" id="SSF55205">
    <property type="entry name" value="EPT/RTPC-like"/>
    <property type="match status" value="1"/>
</dbReference>
<accession>B9JR47</accession>
<gene>
    <name evidence="1" type="primary">murA</name>
    <name type="ordered locus">Avi_0645</name>
</gene>
<proteinExistence type="inferred from homology"/>
<feature type="chain" id="PRO_1000192072" description="UDP-N-acetylglucosamine 1-carboxyvinyltransferase">
    <location>
        <begin position="1"/>
        <end position="430"/>
    </location>
</feature>
<feature type="active site" description="Proton donor" evidence="1">
    <location>
        <position position="126"/>
    </location>
</feature>
<feature type="binding site" evidence="1">
    <location>
        <begin position="22"/>
        <end position="23"/>
    </location>
    <ligand>
        <name>phosphoenolpyruvate</name>
        <dbReference type="ChEBI" id="CHEBI:58702"/>
    </ligand>
</feature>
<feature type="binding site" evidence="1">
    <location>
        <position position="102"/>
    </location>
    <ligand>
        <name>UDP-N-acetyl-alpha-D-glucosamine</name>
        <dbReference type="ChEBI" id="CHEBI:57705"/>
    </ligand>
</feature>
<feature type="binding site" evidence="1">
    <location>
        <begin position="131"/>
        <end position="135"/>
    </location>
    <ligand>
        <name>UDP-N-acetyl-alpha-D-glucosamine</name>
        <dbReference type="ChEBI" id="CHEBI:57705"/>
    </ligand>
</feature>
<feature type="binding site" evidence="1">
    <location>
        <begin position="172"/>
        <end position="175"/>
    </location>
    <ligand>
        <name>UDP-N-acetyl-alpha-D-glucosamine</name>
        <dbReference type="ChEBI" id="CHEBI:57705"/>
    </ligand>
</feature>
<feature type="binding site" evidence="1">
    <location>
        <position position="317"/>
    </location>
    <ligand>
        <name>UDP-N-acetyl-alpha-D-glucosamine</name>
        <dbReference type="ChEBI" id="CHEBI:57705"/>
    </ligand>
</feature>
<feature type="binding site" evidence="1">
    <location>
        <position position="339"/>
    </location>
    <ligand>
        <name>UDP-N-acetyl-alpha-D-glucosamine</name>
        <dbReference type="ChEBI" id="CHEBI:57705"/>
    </ligand>
</feature>
<feature type="modified residue" description="2-(S-cysteinyl)pyruvic acid O-phosphothioketal" evidence="1">
    <location>
        <position position="126"/>
    </location>
</feature>
<organism>
    <name type="scientific">Allorhizobium ampelinum (strain ATCC BAA-846 / DSM 112012 / S4)</name>
    <name type="common">Agrobacterium vitis (strain S4)</name>
    <dbReference type="NCBI Taxonomy" id="311402"/>
    <lineage>
        <taxon>Bacteria</taxon>
        <taxon>Pseudomonadati</taxon>
        <taxon>Pseudomonadota</taxon>
        <taxon>Alphaproteobacteria</taxon>
        <taxon>Hyphomicrobiales</taxon>
        <taxon>Rhizobiaceae</taxon>
        <taxon>Rhizobium/Agrobacterium group</taxon>
        <taxon>Allorhizobium</taxon>
        <taxon>Allorhizobium ampelinum</taxon>
    </lineage>
</organism>
<evidence type="ECO:0000255" key="1">
    <source>
        <dbReference type="HAMAP-Rule" id="MF_00111"/>
    </source>
</evidence>
<keyword id="KW-0131">Cell cycle</keyword>
<keyword id="KW-0132">Cell division</keyword>
<keyword id="KW-0133">Cell shape</keyword>
<keyword id="KW-0961">Cell wall biogenesis/degradation</keyword>
<keyword id="KW-0963">Cytoplasm</keyword>
<keyword id="KW-0573">Peptidoglycan synthesis</keyword>
<keyword id="KW-0670">Pyruvate</keyword>
<keyword id="KW-1185">Reference proteome</keyword>
<keyword id="KW-0808">Transferase</keyword>
<reference key="1">
    <citation type="journal article" date="2009" name="J. Bacteriol.">
        <title>Genome sequences of three Agrobacterium biovars help elucidate the evolution of multichromosome genomes in bacteria.</title>
        <authorList>
            <person name="Slater S.C."/>
            <person name="Goldman B.S."/>
            <person name="Goodner B."/>
            <person name="Setubal J.C."/>
            <person name="Farrand S.K."/>
            <person name="Nester E.W."/>
            <person name="Burr T.J."/>
            <person name="Banta L."/>
            <person name="Dickerman A.W."/>
            <person name="Paulsen I."/>
            <person name="Otten L."/>
            <person name="Suen G."/>
            <person name="Welch R."/>
            <person name="Almeida N.F."/>
            <person name="Arnold F."/>
            <person name="Burton O.T."/>
            <person name="Du Z."/>
            <person name="Ewing A."/>
            <person name="Godsy E."/>
            <person name="Heisel S."/>
            <person name="Houmiel K.L."/>
            <person name="Jhaveri J."/>
            <person name="Lu J."/>
            <person name="Miller N.M."/>
            <person name="Norton S."/>
            <person name="Chen Q."/>
            <person name="Phoolcharoen W."/>
            <person name="Ohlin V."/>
            <person name="Ondrusek D."/>
            <person name="Pride N."/>
            <person name="Stricklin S.L."/>
            <person name="Sun J."/>
            <person name="Wheeler C."/>
            <person name="Wilson L."/>
            <person name="Zhu H."/>
            <person name="Wood D.W."/>
        </authorList>
    </citation>
    <scope>NUCLEOTIDE SEQUENCE [LARGE SCALE GENOMIC DNA]</scope>
    <source>
        <strain>ATCC BAA-846 / DSM 112012 / S4</strain>
    </source>
</reference>